<protein>
    <recommendedName>
        <fullName evidence="1">UDP-N-acetylmuramate--L-alanine ligase</fullName>
        <ecNumber evidence="1">6.3.2.8</ecNumber>
    </recommendedName>
    <alternativeName>
        <fullName evidence="1">UDP-N-acetylmuramoyl-L-alanine synthetase</fullName>
    </alternativeName>
</protein>
<organism>
    <name type="scientific">Salinispora arenicola (strain CNS-205)</name>
    <dbReference type="NCBI Taxonomy" id="391037"/>
    <lineage>
        <taxon>Bacteria</taxon>
        <taxon>Bacillati</taxon>
        <taxon>Actinomycetota</taxon>
        <taxon>Actinomycetes</taxon>
        <taxon>Micromonosporales</taxon>
        <taxon>Micromonosporaceae</taxon>
        <taxon>Salinispora</taxon>
    </lineage>
</organism>
<gene>
    <name evidence="1" type="primary">murC</name>
    <name type="ordered locus">Sare_3438</name>
</gene>
<feature type="chain" id="PRO_0000336867" description="UDP-N-acetylmuramate--L-alanine ligase">
    <location>
        <begin position="1"/>
        <end position="511"/>
    </location>
</feature>
<feature type="region of interest" description="Disordered" evidence="2">
    <location>
        <begin position="481"/>
        <end position="511"/>
    </location>
</feature>
<feature type="compositionally biased region" description="Gly residues" evidence="2">
    <location>
        <begin position="484"/>
        <end position="504"/>
    </location>
</feature>
<feature type="binding site" evidence="1">
    <location>
        <begin position="127"/>
        <end position="133"/>
    </location>
    <ligand>
        <name>ATP</name>
        <dbReference type="ChEBI" id="CHEBI:30616"/>
    </ligand>
</feature>
<evidence type="ECO:0000255" key="1">
    <source>
        <dbReference type="HAMAP-Rule" id="MF_00046"/>
    </source>
</evidence>
<evidence type="ECO:0000256" key="2">
    <source>
        <dbReference type="SAM" id="MobiDB-lite"/>
    </source>
</evidence>
<sequence length="511" mass="53766">MSAKSTARFTPAGQLTAEDLGAIHLIGVGGVGMSGLARLFLTRGISVSGSELREWPSLAGLRALGGTIYMSHEVANLDGVDTVVYSSAIPQDHLELVEARRRGLRVLHRSEALAAAMTGRRTVAVAGTHGKTTTTSMVTMVLQQAGVDPSFVIGGEISEVGSGAHHGTGEYFVVEADESDRSFLIYRPFVSIITNIEADHLNTYGDLANLEAAFADFARLTDPDGFVVTCADDAGSRRLAETLRAEGRRVYTYGTSTDADLRLTEMASSTRGIRYLAEVDGRSLGEFRLPVPGRHMGLNSASAVLAAYLLGLPLDAAEAALAAFPGVRRRFERKGVADNVLVYDEYAYHPTPIALALRTLREVAGDGRLIVVFQPYRLYRTRDLQTEIAEALAIADELVLLEVFGPGELREPGEGSAALIEAVPLPADRKVFVDSWEAAPVEVARRARPGDVVVTMGAPPSSLMGEQLLDALSARRAGSPVGTVPGGEVGGATTIGGTVPGGSAPGASAAG</sequence>
<comment type="function">
    <text evidence="1">Cell wall formation.</text>
</comment>
<comment type="catalytic activity">
    <reaction evidence="1">
        <text>UDP-N-acetyl-alpha-D-muramate + L-alanine + ATP = UDP-N-acetyl-alpha-D-muramoyl-L-alanine + ADP + phosphate + H(+)</text>
        <dbReference type="Rhea" id="RHEA:23372"/>
        <dbReference type="ChEBI" id="CHEBI:15378"/>
        <dbReference type="ChEBI" id="CHEBI:30616"/>
        <dbReference type="ChEBI" id="CHEBI:43474"/>
        <dbReference type="ChEBI" id="CHEBI:57972"/>
        <dbReference type="ChEBI" id="CHEBI:70757"/>
        <dbReference type="ChEBI" id="CHEBI:83898"/>
        <dbReference type="ChEBI" id="CHEBI:456216"/>
        <dbReference type="EC" id="6.3.2.8"/>
    </reaction>
</comment>
<comment type="pathway">
    <text evidence="1">Cell wall biogenesis; peptidoglycan biosynthesis.</text>
</comment>
<comment type="subcellular location">
    <subcellularLocation>
        <location evidence="1">Cytoplasm</location>
    </subcellularLocation>
</comment>
<comment type="similarity">
    <text evidence="1">Belongs to the MurCDEF family.</text>
</comment>
<accession>A8LX80</accession>
<name>MURC_SALAI</name>
<proteinExistence type="inferred from homology"/>
<dbReference type="EC" id="6.3.2.8" evidence="1"/>
<dbReference type="EMBL" id="CP000850">
    <property type="protein sequence ID" value="ABV99240.1"/>
    <property type="molecule type" value="Genomic_DNA"/>
</dbReference>
<dbReference type="SMR" id="A8LX80"/>
<dbReference type="STRING" id="391037.Sare_3438"/>
<dbReference type="KEGG" id="saq:Sare_3438"/>
<dbReference type="PATRIC" id="fig|391037.6.peg.3466"/>
<dbReference type="eggNOG" id="COG0773">
    <property type="taxonomic scope" value="Bacteria"/>
</dbReference>
<dbReference type="HOGENOM" id="CLU_028104_2_1_11"/>
<dbReference type="OrthoDB" id="9804126at2"/>
<dbReference type="UniPathway" id="UPA00219"/>
<dbReference type="GO" id="GO:0005737">
    <property type="term" value="C:cytoplasm"/>
    <property type="evidence" value="ECO:0007669"/>
    <property type="project" value="UniProtKB-SubCell"/>
</dbReference>
<dbReference type="GO" id="GO:0005524">
    <property type="term" value="F:ATP binding"/>
    <property type="evidence" value="ECO:0007669"/>
    <property type="project" value="UniProtKB-UniRule"/>
</dbReference>
<dbReference type="GO" id="GO:0008763">
    <property type="term" value="F:UDP-N-acetylmuramate-L-alanine ligase activity"/>
    <property type="evidence" value="ECO:0007669"/>
    <property type="project" value="UniProtKB-UniRule"/>
</dbReference>
<dbReference type="GO" id="GO:0051301">
    <property type="term" value="P:cell division"/>
    <property type="evidence" value="ECO:0007669"/>
    <property type="project" value="UniProtKB-KW"/>
</dbReference>
<dbReference type="GO" id="GO:0071555">
    <property type="term" value="P:cell wall organization"/>
    <property type="evidence" value="ECO:0007669"/>
    <property type="project" value="UniProtKB-KW"/>
</dbReference>
<dbReference type="GO" id="GO:0009252">
    <property type="term" value="P:peptidoglycan biosynthetic process"/>
    <property type="evidence" value="ECO:0007669"/>
    <property type="project" value="UniProtKB-UniRule"/>
</dbReference>
<dbReference type="GO" id="GO:0008360">
    <property type="term" value="P:regulation of cell shape"/>
    <property type="evidence" value="ECO:0007669"/>
    <property type="project" value="UniProtKB-KW"/>
</dbReference>
<dbReference type="Gene3D" id="3.90.190.20">
    <property type="entry name" value="Mur ligase, C-terminal domain"/>
    <property type="match status" value="1"/>
</dbReference>
<dbReference type="Gene3D" id="3.40.1190.10">
    <property type="entry name" value="Mur-like, catalytic domain"/>
    <property type="match status" value="1"/>
</dbReference>
<dbReference type="Gene3D" id="3.40.50.720">
    <property type="entry name" value="NAD(P)-binding Rossmann-like Domain"/>
    <property type="match status" value="1"/>
</dbReference>
<dbReference type="HAMAP" id="MF_00046">
    <property type="entry name" value="MurC"/>
    <property type="match status" value="1"/>
</dbReference>
<dbReference type="InterPro" id="IPR036565">
    <property type="entry name" value="Mur-like_cat_sf"/>
</dbReference>
<dbReference type="InterPro" id="IPR004101">
    <property type="entry name" value="Mur_ligase_C"/>
</dbReference>
<dbReference type="InterPro" id="IPR036615">
    <property type="entry name" value="Mur_ligase_C_dom_sf"/>
</dbReference>
<dbReference type="InterPro" id="IPR013221">
    <property type="entry name" value="Mur_ligase_cen"/>
</dbReference>
<dbReference type="InterPro" id="IPR000713">
    <property type="entry name" value="Mur_ligase_N"/>
</dbReference>
<dbReference type="InterPro" id="IPR050061">
    <property type="entry name" value="MurCDEF_pg_biosynth"/>
</dbReference>
<dbReference type="InterPro" id="IPR005758">
    <property type="entry name" value="UDP-N-AcMur_Ala_ligase_MurC"/>
</dbReference>
<dbReference type="NCBIfam" id="TIGR01082">
    <property type="entry name" value="murC"/>
    <property type="match status" value="1"/>
</dbReference>
<dbReference type="PANTHER" id="PTHR43445:SF3">
    <property type="entry name" value="UDP-N-ACETYLMURAMATE--L-ALANINE LIGASE"/>
    <property type="match status" value="1"/>
</dbReference>
<dbReference type="PANTHER" id="PTHR43445">
    <property type="entry name" value="UDP-N-ACETYLMURAMATE--L-ALANINE LIGASE-RELATED"/>
    <property type="match status" value="1"/>
</dbReference>
<dbReference type="Pfam" id="PF01225">
    <property type="entry name" value="Mur_ligase"/>
    <property type="match status" value="1"/>
</dbReference>
<dbReference type="Pfam" id="PF02875">
    <property type="entry name" value="Mur_ligase_C"/>
    <property type="match status" value="1"/>
</dbReference>
<dbReference type="Pfam" id="PF08245">
    <property type="entry name" value="Mur_ligase_M"/>
    <property type="match status" value="1"/>
</dbReference>
<dbReference type="SUPFAM" id="SSF51984">
    <property type="entry name" value="MurCD N-terminal domain"/>
    <property type="match status" value="1"/>
</dbReference>
<dbReference type="SUPFAM" id="SSF53623">
    <property type="entry name" value="MurD-like peptide ligases, catalytic domain"/>
    <property type="match status" value="1"/>
</dbReference>
<dbReference type="SUPFAM" id="SSF53244">
    <property type="entry name" value="MurD-like peptide ligases, peptide-binding domain"/>
    <property type="match status" value="1"/>
</dbReference>
<keyword id="KW-0067">ATP-binding</keyword>
<keyword id="KW-0131">Cell cycle</keyword>
<keyword id="KW-0132">Cell division</keyword>
<keyword id="KW-0133">Cell shape</keyword>
<keyword id="KW-0961">Cell wall biogenesis/degradation</keyword>
<keyword id="KW-0963">Cytoplasm</keyword>
<keyword id="KW-0436">Ligase</keyword>
<keyword id="KW-0547">Nucleotide-binding</keyword>
<keyword id="KW-0573">Peptidoglycan synthesis</keyword>
<reference key="1">
    <citation type="submission" date="2007-10" db="EMBL/GenBank/DDBJ databases">
        <title>Complete sequence of Salinispora arenicola CNS-205.</title>
        <authorList>
            <consortium name="US DOE Joint Genome Institute"/>
            <person name="Copeland A."/>
            <person name="Lucas S."/>
            <person name="Lapidus A."/>
            <person name="Barry K."/>
            <person name="Glavina del Rio T."/>
            <person name="Dalin E."/>
            <person name="Tice H."/>
            <person name="Pitluck S."/>
            <person name="Foster B."/>
            <person name="Schmutz J."/>
            <person name="Larimer F."/>
            <person name="Land M."/>
            <person name="Hauser L."/>
            <person name="Kyrpides N."/>
            <person name="Ivanova N."/>
            <person name="Jensen P.R."/>
            <person name="Moore B.S."/>
            <person name="Penn K."/>
            <person name="Jenkins C."/>
            <person name="Udwary D."/>
            <person name="Xiang L."/>
            <person name="Gontang E."/>
            <person name="Richardson P."/>
        </authorList>
    </citation>
    <scope>NUCLEOTIDE SEQUENCE [LARGE SCALE GENOMIC DNA]</scope>
    <source>
        <strain>CNS-205</strain>
    </source>
</reference>